<organism>
    <name type="scientific">Salinibacter ruber (strain DSM 13855 / M31)</name>
    <dbReference type="NCBI Taxonomy" id="309807"/>
    <lineage>
        <taxon>Bacteria</taxon>
        <taxon>Pseudomonadati</taxon>
        <taxon>Rhodothermota</taxon>
        <taxon>Rhodothermia</taxon>
        <taxon>Rhodothermales</taxon>
        <taxon>Salinibacteraceae</taxon>
        <taxon>Salinibacter</taxon>
    </lineage>
</organism>
<comment type="function">
    <text evidence="1">Plays an important role in the de novo pathway of purine nucleotide biosynthesis. Catalyzes the first committed step in the biosynthesis of AMP from IMP.</text>
</comment>
<comment type="catalytic activity">
    <reaction evidence="1">
        <text>IMP + L-aspartate + GTP = N(6)-(1,2-dicarboxyethyl)-AMP + GDP + phosphate + 2 H(+)</text>
        <dbReference type="Rhea" id="RHEA:15753"/>
        <dbReference type="ChEBI" id="CHEBI:15378"/>
        <dbReference type="ChEBI" id="CHEBI:29991"/>
        <dbReference type="ChEBI" id="CHEBI:37565"/>
        <dbReference type="ChEBI" id="CHEBI:43474"/>
        <dbReference type="ChEBI" id="CHEBI:57567"/>
        <dbReference type="ChEBI" id="CHEBI:58053"/>
        <dbReference type="ChEBI" id="CHEBI:58189"/>
        <dbReference type="EC" id="6.3.4.4"/>
    </reaction>
</comment>
<comment type="cofactor">
    <cofactor evidence="1">
        <name>Mg(2+)</name>
        <dbReference type="ChEBI" id="CHEBI:18420"/>
    </cofactor>
    <text evidence="1">Binds 1 Mg(2+) ion per subunit.</text>
</comment>
<comment type="pathway">
    <text evidence="1">Purine metabolism; AMP biosynthesis via de novo pathway; AMP from IMP: step 1/2.</text>
</comment>
<comment type="subunit">
    <text evidence="1">Homodimer.</text>
</comment>
<comment type="subcellular location">
    <subcellularLocation>
        <location evidence="1">Cytoplasm</location>
    </subcellularLocation>
</comment>
<comment type="similarity">
    <text evidence="1">Belongs to the adenylosuccinate synthetase family.</text>
</comment>
<sequence>MPVSIVIGSQWGDEGKGKIVDLLSPDVDIVARYQGGANAGHTIVWDEEGETEEFVLHLVPSGIFHEGVTCVIGNGVVLDPKAILEEIEKIESLGIDVEGRLKISHNAHLIMPYHKAIEAAQEEDRASASDDDEIGTTGRGIGPAYTDKFARTGIRVVDLLDEDVLRRKLRRSIEEKNAILRDVYDAEALDVDRIVEEYVEFDQKIDDYVTDTSAYLSRALDDGARVLAEGAQGSLLDVDFGSYPYVTSSHPTAGGCCTGLGVSPTEIDRVLGIAKAYCTRVGNGPFPTELDGEVGQALREKGGEFGATTGRPRRCGWLDLVALRYTCMVNGFNELALTKLDILSGIDELKVCTEYRYDGKTTRRFPSEPQNLTRVEPQYETLPGWEADISAVRHVDDLPRAAQDYLAFIENYLDVEIGLVSNGPRRSQIITDVQPMAAA</sequence>
<keyword id="KW-0963">Cytoplasm</keyword>
<keyword id="KW-0342">GTP-binding</keyword>
<keyword id="KW-0436">Ligase</keyword>
<keyword id="KW-0460">Magnesium</keyword>
<keyword id="KW-0479">Metal-binding</keyword>
<keyword id="KW-0547">Nucleotide-binding</keyword>
<keyword id="KW-0658">Purine biosynthesis</keyword>
<keyword id="KW-1185">Reference proteome</keyword>
<dbReference type="EC" id="6.3.4.4" evidence="1"/>
<dbReference type="EMBL" id="CP000159">
    <property type="protein sequence ID" value="ABC43589.1"/>
    <property type="molecule type" value="Genomic_DNA"/>
</dbReference>
<dbReference type="RefSeq" id="WP_011404565.1">
    <property type="nucleotide sequence ID" value="NC_007677.1"/>
</dbReference>
<dbReference type="RefSeq" id="YP_445940.1">
    <property type="nucleotide sequence ID" value="NC_007677.1"/>
</dbReference>
<dbReference type="SMR" id="Q2S1J1"/>
<dbReference type="STRING" id="309807.SRU_1827"/>
<dbReference type="EnsemblBacteria" id="ABC43589">
    <property type="protein sequence ID" value="ABC43589"/>
    <property type="gene ID" value="SRU_1827"/>
</dbReference>
<dbReference type="KEGG" id="sru:SRU_1827"/>
<dbReference type="PATRIC" id="fig|309807.25.peg.1894"/>
<dbReference type="eggNOG" id="COG0104">
    <property type="taxonomic scope" value="Bacteria"/>
</dbReference>
<dbReference type="HOGENOM" id="CLU_029848_0_0_10"/>
<dbReference type="OrthoDB" id="9807553at2"/>
<dbReference type="UniPathway" id="UPA00075">
    <property type="reaction ID" value="UER00335"/>
</dbReference>
<dbReference type="Proteomes" id="UP000008674">
    <property type="component" value="Chromosome"/>
</dbReference>
<dbReference type="GO" id="GO:0005737">
    <property type="term" value="C:cytoplasm"/>
    <property type="evidence" value="ECO:0007669"/>
    <property type="project" value="UniProtKB-SubCell"/>
</dbReference>
<dbReference type="GO" id="GO:0004019">
    <property type="term" value="F:adenylosuccinate synthase activity"/>
    <property type="evidence" value="ECO:0007669"/>
    <property type="project" value="UniProtKB-UniRule"/>
</dbReference>
<dbReference type="GO" id="GO:0005525">
    <property type="term" value="F:GTP binding"/>
    <property type="evidence" value="ECO:0007669"/>
    <property type="project" value="UniProtKB-UniRule"/>
</dbReference>
<dbReference type="GO" id="GO:0000287">
    <property type="term" value="F:magnesium ion binding"/>
    <property type="evidence" value="ECO:0007669"/>
    <property type="project" value="UniProtKB-UniRule"/>
</dbReference>
<dbReference type="GO" id="GO:0044208">
    <property type="term" value="P:'de novo' AMP biosynthetic process"/>
    <property type="evidence" value="ECO:0007669"/>
    <property type="project" value="UniProtKB-UniRule"/>
</dbReference>
<dbReference type="GO" id="GO:0046040">
    <property type="term" value="P:IMP metabolic process"/>
    <property type="evidence" value="ECO:0007669"/>
    <property type="project" value="TreeGrafter"/>
</dbReference>
<dbReference type="CDD" id="cd03108">
    <property type="entry name" value="AdSS"/>
    <property type="match status" value="1"/>
</dbReference>
<dbReference type="FunFam" id="1.10.300.10:FF:000001">
    <property type="entry name" value="Adenylosuccinate synthetase"/>
    <property type="match status" value="1"/>
</dbReference>
<dbReference type="FunFam" id="3.90.170.10:FF:000001">
    <property type="entry name" value="Adenylosuccinate synthetase"/>
    <property type="match status" value="1"/>
</dbReference>
<dbReference type="Gene3D" id="3.40.440.10">
    <property type="entry name" value="Adenylosuccinate Synthetase, subunit A, domain 1"/>
    <property type="match status" value="1"/>
</dbReference>
<dbReference type="Gene3D" id="1.10.300.10">
    <property type="entry name" value="Adenylosuccinate Synthetase, subunit A, domain 2"/>
    <property type="match status" value="1"/>
</dbReference>
<dbReference type="Gene3D" id="3.90.170.10">
    <property type="entry name" value="Adenylosuccinate Synthetase, subunit A, domain 3"/>
    <property type="match status" value="1"/>
</dbReference>
<dbReference type="HAMAP" id="MF_00011">
    <property type="entry name" value="Adenylosucc_synth"/>
    <property type="match status" value="1"/>
</dbReference>
<dbReference type="InterPro" id="IPR018220">
    <property type="entry name" value="Adenylosuccin_syn_GTP-bd"/>
</dbReference>
<dbReference type="InterPro" id="IPR033128">
    <property type="entry name" value="Adenylosuccin_syn_Lys_AS"/>
</dbReference>
<dbReference type="InterPro" id="IPR042109">
    <property type="entry name" value="Adenylosuccinate_synth_dom1"/>
</dbReference>
<dbReference type="InterPro" id="IPR042110">
    <property type="entry name" value="Adenylosuccinate_synth_dom2"/>
</dbReference>
<dbReference type="InterPro" id="IPR042111">
    <property type="entry name" value="Adenylosuccinate_synth_dom3"/>
</dbReference>
<dbReference type="InterPro" id="IPR001114">
    <property type="entry name" value="Adenylosuccinate_synthetase"/>
</dbReference>
<dbReference type="InterPro" id="IPR027417">
    <property type="entry name" value="P-loop_NTPase"/>
</dbReference>
<dbReference type="NCBIfam" id="NF002223">
    <property type="entry name" value="PRK01117.1"/>
    <property type="match status" value="1"/>
</dbReference>
<dbReference type="NCBIfam" id="TIGR00184">
    <property type="entry name" value="purA"/>
    <property type="match status" value="1"/>
</dbReference>
<dbReference type="PANTHER" id="PTHR11846">
    <property type="entry name" value="ADENYLOSUCCINATE SYNTHETASE"/>
    <property type="match status" value="1"/>
</dbReference>
<dbReference type="PANTHER" id="PTHR11846:SF0">
    <property type="entry name" value="ADENYLOSUCCINATE SYNTHETASE"/>
    <property type="match status" value="1"/>
</dbReference>
<dbReference type="Pfam" id="PF00709">
    <property type="entry name" value="Adenylsucc_synt"/>
    <property type="match status" value="1"/>
</dbReference>
<dbReference type="SMART" id="SM00788">
    <property type="entry name" value="Adenylsucc_synt"/>
    <property type="match status" value="1"/>
</dbReference>
<dbReference type="SUPFAM" id="SSF52540">
    <property type="entry name" value="P-loop containing nucleoside triphosphate hydrolases"/>
    <property type="match status" value="1"/>
</dbReference>
<dbReference type="PROSITE" id="PS01266">
    <property type="entry name" value="ADENYLOSUCCIN_SYN_1"/>
    <property type="match status" value="1"/>
</dbReference>
<dbReference type="PROSITE" id="PS00513">
    <property type="entry name" value="ADENYLOSUCCIN_SYN_2"/>
    <property type="match status" value="1"/>
</dbReference>
<protein>
    <recommendedName>
        <fullName evidence="1">Adenylosuccinate synthetase</fullName>
        <shortName evidence="1">AMPSase</shortName>
        <shortName evidence="1">AdSS</shortName>
        <ecNumber evidence="1">6.3.4.4</ecNumber>
    </recommendedName>
    <alternativeName>
        <fullName evidence="1">IMP--aspartate ligase</fullName>
    </alternativeName>
</protein>
<accession>Q2S1J1</accession>
<name>PURA_SALRD</name>
<proteinExistence type="inferred from homology"/>
<feature type="chain" id="PRO_1000070945" description="Adenylosuccinate synthetase">
    <location>
        <begin position="1"/>
        <end position="439"/>
    </location>
</feature>
<feature type="active site" description="Proton acceptor" evidence="1">
    <location>
        <position position="13"/>
    </location>
</feature>
<feature type="active site" description="Proton donor" evidence="1">
    <location>
        <position position="41"/>
    </location>
</feature>
<feature type="binding site" evidence="1">
    <location>
        <begin position="12"/>
        <end position="18"/>
    </location>
    <ligand>
        <name>GTP</name>
        <dbReference type="ChEBI" id="CHEBI:37565"/>
    </ligand>
</feature>
<feature type="binding site" description="in other chain" evidence="1">
    <location>
        <begin position="13"/>
        <end position="16"/>
    </location>
    <ligand>
        <name>IMP</name>
        <dbReference type="ChEBI" id="CHEBI:58053"/>
        <note>ligand shared between dimeric partners</note>
    </ligand>
</feature>
<feature type="binding site" evidence="1">
    <location>
        <position position="13"/>
    </location>
    <ligand>
        <name>Mg(2+)</name>
        <dbReference type="ChEBI" id="CHEBI:18420"/>
    </ligand>
</feature>
<feature type="binding site" description="in other chain" evidence="1">
    <location>
        <begin position="38"/>
        <end position="41"/>
    </location>
    <ligand>
        <name>IMP</name>
        <dbReference type="ChEBI" id="CHEBI:58053"/>
        <note>ligand shared between dimeric partners</note>
    </ligand>
</feature>
<feature type="binding site" evidence="1">
    <location>
        <begin position="40"/>
        <end position="42"/>
    </location>
    <ligand>
        <name>GTP</name>
        <dbReference type="ChEBI" id="CHEBI:37565"/>
    </ligand>
</feature>
<feature type="binding site" evidence="1">
    <location>
        <position position="40"/>
    </location>
    <ligand>
        <name>Mg(2+)</name>
        <dbReference type="ChEBI" id="CHEBI:18420"/>
    </ligand>
</feature>
<feature type="binding site" description="in other chain" evidence="1">
    <location>
        <position position="137"/>
    </location>
    <ligand>
        <name>IMP</name>
        <dbReference type="ChEBI" id="CHEBI:58053"/>
        <note>ligand shared between dimeric partners</note>
    </ligand>
</feature>
<feature type="binding site" evidence="1">
    <location>
        <position position="151"/>
    </location>
    <ligand>
        <name>IMP</name>
        <dbReference type="ChEBI" id="CHEBI:58053"/>
        <note>ligand shared between dimeric partners</note>
    </ligand>
</feature>
<feature type="binding site" description="in other chain" evidence="1">
    <location>
        <position position="232"/>
    </location>
    <ligand>
        <name>IMP</name>
        <dbReference type="ChEBI" id="CHEBI:58053"/>
        <note>ligand shared between dimeric partners</note>
    </ligand>
</feature>
<feature type="binding site" description="in other chain" evidence="1">
    <location>
        <position position="247"/>
    </location>
    <ligand>
        <name>IMP</name>
        <dbReference type="ChEBI" id="CHEBI:58053"/>
        <note>ligand shared between dimeric partners</note>
    </ligand>
</feature>
<feature type="binding site" evidence="1">
    <location>
        <begin position="307"/>
        <end position="313"/>
    </location>
    <ligand>
        <name>substrate</name>
    </ligand>
</feature>
<feature type="binding site" description="in other chain" evidence="1">
    <location>
        <position position="311"/>
    </location>
    <ligand>
        <name>IMP</name>
        <dbReference type="ChEBI" id="CHEBI:58053"/>
        <note>ligand shared between dimeric partners</note>
    </ligand>
</feature>
<feature type="binding site" evidence="1">
    <location>
        <position position="313"/>
    </location>
    <ligand>
        <name>GTP</name>
        <dbReference type="ChEBI" id="CHEBI:37565"/>
    </ligand>
</feature>
<feature type="binding site" evidence="1">
    <location>
        <begin position="339"/>
        <end position="341"/>
    </location>
    <ligand>
        <name>GTP</name>
        <dbReference type="ChEBI" id="CHEBI:37565"/>
    </ligand>
</feature>
<feature type="binding site" evidence="1">
    <location>
        <begin position="421"/>
        <end position="423"/>
    </location>
    <ligand>
        <name>GTP</name>
        <dbReference type="ChEBI" id="CHEBI:37565"/>
    </ligand>
</feature>
<reference key="1">
    <citation type="journal article" date="2005" name="Proc. Natl. Acad. Sci. U.S.A.">
        <title>The genome of Salinibacter ruber: convergence and gene exchange among hyperhalophilic bacteria and archaea.</title>
        <authorList>
            <person name="Mongodin E.F."/>
            <person name="Nelson K.E."/>
            <person name="Daugherty S."/>
            <person name="DeBoy R.T."/>
            <person name="Wister J."/>
            <person name="Khouri H."/>
            <person name="Weidman J."/>
            <person name="Walsh D.A."/>
            <person name="Papke R.T."/>
            <person name="Sanchez Perez G."/>
            <person name="Sharma A.K."/>
            <person name="Nesbo C.L."/>
            <person name="MacLeod D."/>
            <person name="Bapteste E."/>
            <person name="Doolittle W.F."/>
            <person name="Charlebois R.L."/>
            <person name="Legault B."/>
            <person name="Rodriguez-Valera F."/>
        </authorList>
    </citation>
    <scope>NUCLEOTIDE SEQUENCE [LARGE SCALE GENOMIC DNA]</scope>
    <source>
        <strain>DSM 13855 / CECT 5946 / M31</strain>
    </source>
</reference>
<gene>
    <name evidence="1" type="primary">purA</name>
    <name type="ordered locus">SRU_1827</name>
</gene>
<evidence type="ECO:0000255" key="1">
    <source>
        <dbReference type="HAMAP-Rule" id="MF_00011"/>
    </source>
</evidence>